<keyword id="KW-0007">Acetylation</keyword>
<keyword id="KW-0556">Organic radical</keyword>
<keyword id="KW-1185">Reference proteome</keyword>
<protein>
    <recommendedName>
        <fullName evidence="1">Autonomous glycyl radical cofactor</fullName>
    </recommendedName>
</protein>
<organism>
    <name type="scientific">Shigella sonnei (strain Ss046)</name>
    <dbReference type="NCBI Taxonomy" id="300269"/>
    <lineage>
        <taxon>Bacteria</taxon>
        <taxon>Pseudomonadati</taxon>
        <taxon>Pseudomonadota</taxon>
        <taxon>Gammaproteobacteria</taxon>
        <taxon>Enterobacterales</taxon>
        <taxon>Enterobacteriaceae</taxon>
        <taxon>Shigella</taxon>
    </lineage>
</organism>
<accession>Q3YYT6</accession>
<gene>
    <name evidence="1" type="primary">grcA</name>
    <name type="ordered locus">SSON_2705</name>
</gene>
<dbReference type="EMBL" id="CP000038">
    <property type="protein sequence ID" value="AAZ89326.1"/>
    <property type="molecule type" value="Genomic_DNA"/>
</dbReference>
<dbReference type="RefSeq" id="WP_000627807.1">
    <property type="nucleotide sequence ID" value="NC_007384.1"/>
</dbReference>
<dbReference type="SMR" id="Q3YYT6"/>
<dbReference type="GeneID" id="93774507"/>
<dbReference type="KEGG" id="ssn:SSON_2705"/>
<dbReference type="HOGENOM" id="CLU_133780_0_0_6"/>
<dbReference type="Proteomes" id="UP000002529">
    <property type="component" value="Chromosome"/>
</dbReference>
<dbReference type="GO" id="GO:0005829">
    <property type="term" value="C:cytosol"/>
    <property type="evidence" value="ECO:0007669"/>
    <property type="project" value="TreeGrafter"/>
</dbReference>
<dbReference type="GO" id="GO:0008861">
    <property type="term" value="F:formate C-acetyltransferase activity"/>
    <property type="evidence" value="ECO:0007669"/>
    <property type="project" value="TreeGrafter"/>
</dbReference>
<dbReference type="FunFam" id="3.20.70.20:FF:000002">
    <property type="entry name" value="Autonomous glycyl radical cofactor"/>
    <property type="match status" value="1"/>
</dbReference>
<dbReference type="Gene3D" id="3.20.70.20">
    <property type="match status" value="1"/>
</dbReference>
<dbReference type="HAMAP" id="MF_00806">
    <property type="entry name" value="GrcA"/>
    <property type="match status" value="1"/>
</dbReference>
<dbReference type="InterPro" id="IPR050244">
    <property type="entry name" value="Auton_GlycylRad_Cofactor"/>
</dbReference>
<dbReference type="InterPro" id="IPR019777">
    <property type="entry name" value="Form_AcTrfase_GR_CS"/>
</dbReference>
<dbReference type="InterPro" id="IPR001150">
    <property type="entry name" value="Gly_radical"/>
</dbReference>
<dbReference type="InterPro" id="IPR011140">
    <property type="entry name" value="Glycyl_radical_cofactor_GrcA"/>
</dbReference>
<dbReference type="NCBIfam" id="TIGR04365">
    <property type="entry name" value="spare_glycyl"/>
    <property type="match status" value="1"/>
</dbReference>
<dbReference type="PANTHER" id="PTHR30191">
    <property type="entry name" value="FORMATE ACETYLTRANSFERASE"/>
    <property type="match status" value="1"/>
</dbReference>
<dbReference type="PANTHER" id="PTHR30191:SF0">
    <property type="entry name" value="FORMATE ACETYLTRANSFERASE 1"/>
    <property type="match status" value="1"/>
</dbReference>
<dbReference type="Pfam" id="PF01228">
    <property type="entry name" value="Gly_radical"/>
    <property type="match status" value="1"/>
</dbReference>
<dbReference type="PIRSF" id="PIRSF000378">
    <property type="entry name" value="Gly_radicl_yfiD"/>
    <property type="match status" value="1"/>
</dbReference>
<dbReference type="SUPFAM" id="SSF51998">
    <property type="entry name" value="PFL-like glycyl radical enzymes"/>
    <property type="match status" value="1"/>
</dbReference>
<dbReference type="PROSITE" id="PS00850">
    <property type="entry name" value="GLY_RADICAL_1"/>
    <property type="match status" value="1"/>
</dbReference>
<dbReference type="PROSITE" id="PS51149">
    <property type="entry name" value="GLY_RADICAL_2"/>
    <property type="match status" value="1"/>
</dbReference>
<name>GRCA_SHISS</name>
<feature type="chain" id="PRO_1000083737" description="Autonomous glycyl radical cofactor">
    <location>
        <begin position="1"/>
        <end position="127"/>
    </location>
</feature>
<feature type="domain" description="Glycine radical" evidence="1">
    <location>
        <begin position="5"/>
        <end position="127"/>
    </location>
</feature>
<feature type="modified residue" description="N6-acetyllysine" evidence="1">
    <location>
        <position position="48"/>
    </location>
</feature>
<feature type="modified residue" description="N6-acetyllysine" evidence="1">
    <location>
        <position position="88"/>
    </location>
</feature>
<feature type="modified residue" description="N6-acetyllysine" evidence="1">
    <location>
        <position position="92"/>
    </location>
</feature>
<feature type="modified residue" description="Glycine radical" evidence="1">
    <location>
        <position position="102"/>
    </location>
</feature>
<sequence>MITGIQITKAANDDLLNSFWLLDSEKGEARCIVAKAGYAEDEVVAVSKLGDIEYREVPVEVKPEVRVEGGQHLNVNVLRRETLEDAVKHPEKYPQLTIRVSGYAVRFNSLTPEQQRDVIARTFTESL</sequence>
<evidence type="ECO:0000255" key="1">
    <source>
        <dbReference type="HAMAP-Rule" id="MF_00806"/>
    </source>
</evidence>
<reference key="1">
    <citation type="journal article" date="2005" name="Nucleic Acids Res.">
        <title>Genome dynamics and diversity of Shigella species, the etiologic agents of bacillary dysentery.</title>
        <authorList>
            <person name="Yang F."/>
            <person name="Yang J."/>
            <person name="Zhang X."/>
            <person name="Chen L."/>
            <person name="Jiang Y."/>
            <person name="Yan Y."/>
            <person name="Tang X."/>
            <person name="Wang J."/>
            <person name="Xiong Z."/>
            <person name="Dong J."/>
            <person name="Xue Y."/>
            <person name="Zhu Y."/>
            <person name="Xu X."/>
            <person name="Sun L."/>
            <person name="Chen S."/>
            <person name="Nie H."/>
            <person name="Peng J."/>
            <person name="Xu J."/>
            <person name="Wang Y."/>
            <person name="Yuan Z."/>
            <person name="Wen Y."/>
            <person name="Yao Z."/>
            <person name="Shen Y."/>
            <person name="Qiang B."/>
            <person name="Hou Y."/>
            <person name="Yu J."/>
            <person name="Jin Q."/>
        </authorList>
    </citation>
    <scope>NUCLEOTIDE SEQUENCE [LARGE SCALE GENOMIC DNA]</scope>
    <source>
        <strain>Ss046</strain>
    </source>
</reference>
<comment type="function">
    <text evidence="1">Acts as a radical domain for damaged PFL and possibly other radical proteins.</text>
</comment>
<proteinExistence type="inferred from homology"/>